<reference key="1">
    <citation type="journal article" date="2004" name="Nature">
        <title>Genome evolution in yeasts.</title>
        <authorList>
            <person name="Dujon B."/>
            <person name="Sherman D."/>
            <person name="Fischer G."/>
            <person name="Durrens P."/>
            <person name="Casaregola S."/>
            <person name="Lafontaine I."/>
            <person name="de Montigny J."/>
            <person name="Marck C."/>
            <person name="Neuveglise C."/>
            <person name="Talla E."/>
            <person name="Goffard N."/>
            <person name="Frangeul L."/>
            <person name="Aigle M."/>
            <person name="Anthouard V."/>
            <person name="Babour A."/>
            <person name="Barbe V."/>
            <person name="Barnay S."/>
            <person name="Blanchin S."/>
            <person name="Beckerich J.-M."/>
            <person name="Beyne E."/>
            <person name="Bleykasten C."/>
            <person name="Boisrame A."/>
            <person name="Boyer J."/>
            <person name="Cattolico L."/>
            <person name="Confanioleri F."/>
            <person name="de Daruvar A."/>
            <person name="Despons L."/>
            <person name="Fabre E."/>
            <person name="Fairhead C."/>
            <person name="Ferry-Dumazet H."/>
            <person name="Groppi A."/>
            <person name="Hantraye F."/>
            <person name="Hennequin C."/>
            <person name="Jauniaux N."/>
            <person name="Joyet P."/>
            <person name="Kachouri R."/>
            <person name="Kerrest A."/>
            <person name="Koszul R."/>
            <person name="Lemaire M."/>
            <person name="Lesur I."/>
            <person name="Ma L."/>
            <person name="Muller H."/>
            <person name="Nicaud J.-M."/>
            <person name="Nikolski M."/>
            <person name="Oztas S."/>
            <person name="Ozier-Kalogeropoulos O."/>
            <person name="Pellenz S."/>
            <person name="Potier S."/>
            <person name="Richard G.-F."/>
            <person name="Straub M.-L."/>
            <person name="Suleau A."/>
            <person name="Swennen D."/>
            <person name="Tekaia F."/>
            <person name="Wesolowski-Louvel M."/>
            <person name="Westhof E."/>
            <person name="Wirth B."/>
            <person name="Zeniou-Meyer M."/>
            <person name="Zivanovic Y."/>
            <person name="Bolotin-Fukuhara M."/>
            <person name="Thierry A."/>
            <person name="Bouchier C."/>
            <person name="Caudron B."/>
            <person name="Scarpelli C."/>
            <person name="Gaillardin C."/>
            <person name="Weissenbach J."/>
            <person name="Wincker P."/>
            <person name="Souciet J.-L."/>
        </authorList>
    </citation>
    <scope>NUCLEOTIDE SEQUENCE [LARGE SCALE GENOMIC DNA]</scope>
    <source>
        <strain>ATCC 8585 / CBS 2359 / DSM 70799 / NBRC 1267 / NRRL Y-1140 / WM37</strain>
    </source>
</reference>
<comment type="function">
    <text evidence="1">Core regulatory subunit of the histone H2A phosphatase complex, which dephosphorylates H2AS128ph (gamma-H2A) that has been displaced from sites of DNA lesions in the double-stranded DNA break repair process. Dephosphorylation is necessary for efficient recovery from the DNA damage checkpoint (By similarity).</text>
</comment>
<comment type="subunit">
    <text evidence="1">Regulatory subunit 3 (R3) of the histone H2A phosphatase complex (HTP-C) consisting of PPH3, PSY2 and PSY4.</text>
</comment>
<comment type="subcellular location">
    <subcellularLocation>
        <location evidence="1">Nucleus</location>
    </subcellularLocation>
</comment>
<organism>
    <name type="scientific">Kluyveromyces lactis (strain ATCC 8585 / CBS 2359 / DSM 70799 / NBRC 1267 / NRRL Y-1140 / WM37)</name>
    <name type="common">Yeast</name>
    <name type="synonym">Candida sphaerica</name>
    <dbReference type="NCBI Taxonomy" id="284590"/>
    <lineage>
        <taxon>Eukaryota</taxon>
        <taxon>Fungi</taxon>
        <taxon>Dikarya</taxon>
        <taxon>Ascomycota</taxon>
        <taxon>Saccharomycotina</taxon>
        <taxon>Saccharomycetes</taxon>
        <taxon>Saccharomycetales</taxon>
        <taxon>Saccharomycetaceae</taxon>
        <taxon>Kluyveromyces</taxon>
    </lineage>
</organism>
<accession>Q6CQ91</accession>
<gene>
    <name type="primary">PSY2</name>
    <name type="ordered locus">KLLA0D18887g</name>
</gene>
<dbReference type="EMBL" id="CR382124">
    <property type="protein sequence ID" value="CAH00994.1"/>
    <property type="molecule type" value="Genomic_DNA"/>
</dbReference>
<dbReference type="RefSeq" id="XP_453898.1">
    <property type="nucleotide sequence ID" value="XM_453898.1"/>
</dbReference>
<dbReference type="FunCoup" id="Q6CQ91">
    <property type="interactions" value="960"/>
</dbReference>
<dbReference type="STRING" id="284590.Q6CQ91"/>
<dbReference type="PaxDb" id="284590-Q6CQ91"/>
<dbReference type="KEGG" id="kla:KLLA0_D18887g"/>
<dbReference type="eggNOG" id="KOG2175">
    <property type="taxonomic scope" value="Eukaryota"/>
</dbReference>
<dbReference type="HOGENOM" id="CLU_004909_4_0_1"/>
<dbReference type="InParanoid" id="Q6CQ91"/>
<dbReference type="OMA" id="YHRYMIS"/>
<dbReference type="Proteomes" id="UP000000598">
    <property type="component" value="Chromosome D"/>
</dbReference>
<dbReference type="GO" id="GO:0005654">
    <property type="term" value="C:nucleoplasm"/>
    <property type="evidence" value="ECO:0007669"/>
    <property type="project" value="TreeGrafter"/>
</dbReference>
<dbReference type="GO" id="GO:0030289">
    <property type="term" value="C:protein phosphatase 4 complex"/>
    <property type="evidence" value="ECO:0007669"/>
    <property type="project" value="TreeGrafter"/>
</dbReference>
<dbReference type="GO" id="GO:0072542">
    <property type="term" value="F:protein phosphatase activator activity"/>
    <property type="evidence" value="ECO:0007669"/>
    <property type="project" value="TreeGrafter"/>
</dbReference>
<dbReference type="GO" id="GO:0006974">
    <property type="term" value="P:DNA damage response"/>
    <property type="evidence" value="ECO:0007669"/>
    <property type="project" value="TreeGrafter"/>
</dbReference>
<dbReference type="FunFam" id="2.30.29.30:FF:000455">
    <property type="entry name" value="Psy2p"/>
    <property type="match status" value="1"/>
</dbReference>
<dbReference type="Gene3D" id="1.25.10.10">
    <property type="entry name" value="Leucine-rich Repeat Variant"/>
    <property type="match status" value="1"/>
</dbReference>
<dbReference type="Gene3D" id="2.30.29.30">
    <property type="entry name" value="Pleckstrin-homology domain (PH domain)/Phosphotyrosine-binding domain (PTB)"/>
    <property type="match status" value="1"/>
</dbReference>
<dbReference type="InterPro" id="IPR011989">
    <property type="entry name" value="ARM-like"/>
</dbReference>
<dbReference type="InterPro" id="IPR016024">
    <property type="entry name" value="ARM-type_fold"/>
</dbReference>
<dbReference type="InterPro" id="IPR055236">
    <property type="entry name" value="EVH1_PP4R3"/>
</dbReference>
<dbReference type="InterPro" id="IPR006887">
    <property type="entry name" value="P4R3-like_central_dom"/>
</dbReference>
<dbReference type="InterPro" id="IPR011993">
    <property type="entry name" value="PH-like_dom_sf"/>
</dbReference>
<dbReference type="InterPro" id="IPR051137">
    <property type="entry name" value="PP4R3-like"/>
</dbReference>
<dbReference type="PANTHER" id="PTHR23318">
    <property type="entry name" value="ATP SYNTHASE GAMMA-RELATED"/>
    <property type="match status" value="1"/>
</dbReference>
<dbReference type="PANTHER" id="PTHR23318:SF0">
    <property type="entry name" value="SERINE_THREONINE-PROTEIN PHOSPHATASE 4 REGULATORY SUBUNIT 3"/>
    <property type="match status" value="1"/>
</dbReference>
<dbReference type="Pfam" id="PF22972">
    <property type="entry name" value="EVH1_PP4R3"/>
    <property type="match status" value="1"/>
</dbReference>
<dbReference type="Pfam" id="PF04802">
    <property type="entry name" value="PP4R3"/>
    <property type="match status" value="1"/>
</dbReference>
<dbReference type="SUPFAM" id="SSF48371">
    <property type="entry name" value="ARM repeat"/>
    <property type="match status" value="1"/>
</dbReference>
<dbReference type="SUPFAM" id="SSF50729">
    <property type="entry name" value="PH domain-like"/>
    <property type="match status" value="1"/>
</dbReference>
<name>PP4R3_KLULA</name>
<protein>
    <recommendedName>
        <fullName>Serine/threonine-protein phosphatase 4 regulatory subunit 3</fullName>
        <shortName>PP4R3</shortName>
    </recommendedName>
</protein>
<feature type="chain" id="PRO_0000223657" description="Serine/threonine-protein phosphatase 4 regulatory subunit 3">
    <location>
        <begin position="1"/>
        <end position="749"/>
    </location>
</feature>
<sequence length="749" mass="86516">MSESNNMHVSGDGAKQSVYTEKKRVKVYVLENNEWKDTGTGFCQGTVEERTIDDTQTAEKMAYLLVVDEDSDDQVLLKSRLEQNIEYQRQEETLIVWKDLNGQDIALSFEESIGCDSLCEYICFVQKNIESRISLVAVRSTDDGIGSVHEIITGPVNLPSNVPNQTEESLLEALKILNENTSFDYLRNETIQFVINDHYLATLIRSFYQSEESKLYRNLLLLSNIVKTLILFNSKEILEEMINDENFLCVCGILEYDTEFPNSKLNHRQYLKDKEPNFKEMIPISDPTIKLMITQNFRLQFLKDVVLVRFLDDQSFTFISDLMLSYQNSIIDFLQEDSNNFINQVISMYKVEEDSTVTPDKRRDGIKLLHECIQLSQNLNSIEKTLFYKFLIKKGLFQVIQFAFNMETNNDIRILATDIVVGLIEHDIQLIQSVQSDEVTLLNDENSDIDSTDMSLLLILTKILLTDKSPGLKEQSFQALVSLLDPEDYIVDDYQNHDDNIDTRIDNMLQIQNGKNHDGLDGERNHEKFQLAEYLQCFYRQVAPSLFHCFIDGSVNLYECDQQLLIKLVKLLNLMIQGHEASISRRFILENGILIRLISLASSDYILQLRLAAVRCFKNIVFLNDDFYLRYLIGKNLFDPIFEVFKENLNEDNMANSTILDFLKSLNTQLKVVEQEDIPLSGSKSSRNFMLLNKYICGRYGDILLKADYVSFTREMMAIYHEETQKLASLSTTETSFDENDNTTLEVEV</sequence>
<proteinExistence type="inferred from homology"/>
<keyword id="KW-0539">Nucleus</keyword>
<keyword id="KW-1185">Reference proteome</keyword>
<evidence type="ECO:0000250" key="1"/>